<organism>
    <name type="scientific">Escherichia coli O157:H7</name>
    <dbReference type="NCBI Taxonomy" id="83334"/>
    <lineage>
        <taxon>Bacteria</taxon>
        <taxon>Pseudomonadati</taxon>
        <taxon>Pseudomonadota</taxon>
        <taxon>Gammaproteobacteria</taxon>
        <taxon>Enterobacterales</taxon>
        <taxon>Enterobacteriaceae</taxon>
        <taxon>Escherichia</taxon>
    </lineage>
</organism>
<accession>P0A6I2</accession>
<accession>P03823</accession>
<accession>P23863</accession>
<accession>P78263</accession>
<keyword id="KW-0067">ATP-binding</keyword>
<keyword id="KW-0963">Cytoplasm</keyword>
<keyword id="KW-0418">Kinase</keyword>
<keyword id="KW-0547">Nucleotide-binding</keyword>
<keyword id="KW-1185">Reference proteome</keyword>
<keyword id="KW-0808">Transferase</keyword>
<sequence>MTAIAPVITIDGPSGAGKGTLCKAMAEALQWHLLDSGAIYRVLALAALHHHVDVASEDALVPLASHLDVRFVSTNGNLEVILEGEDVSGEIRTQEVANAASQVAAFPRVREALLRRQRAFRELPGLIADGRDMGTVVFPDAPVKIFLDASSEERAHRRMLQLQEKGFSVNFERLLAEIKERDDRDRNRAVAPLVPAADALVLDSTTLSIEQVIEKALQYARQKLALA</sequence>
<evidence type="ECO:0000250" key="1"/>
<evidence type="ECO:0000305" key="2"/>
<dbReference type="EC" id="2.7.4.25"/>
<dbReference type="EMBL" id="AE005174">
    <property type="protein sequence ID" value="AAG55395.1"/>
    <property type="molecule type" value="Genomic_DNA"/>
</dbReference>
<dbReference type="EMBL" id="BA000007">
    <property type="protein sequence ID" value="BAB34416.1"/>
    <property type="molecule type" value="Genomic_DNA"/>
</dbReference>
<dbReference type="PIR" id="A99753">
    <property type="entry name" value="A99753"/>
</dbReference>
<dbReference type="PIR" id="G85616">
    <property type="entry name" value="G85616"/>
</dbReference>
<dbReference type="RefSeq" id="NP_309020.1">
    <property type="nucleotide sequence ID" value="NC_002695.1"/>
</dbReference>
<dbReference type="RefSeq" id="WP_000125016.1">
    <property type="nucleotide sequence ID" value="NZ_VOAI01000006.1"/>
</dbReference>
<dbReference type="SMR" id="P0A6I2"/>
<dbReference type="STRING" id="155864.Z1256"/>
<dbReference type="GeneID" id="917734"/>
<dbReference type="GeneID" id="93776507"/>
<dbReference type="KEGG" id="ece:Z1256"/>
<dbReference type="KEGG" id="ecs:ECs_0993"/>
<dbReference type="PATRIC" id="fig|386585.9.peg.1113"/>
<dbReference type="eggNOG" id="COG0283">
    <property type="taxonomic scope" value="Bacteria"/>
</dbReference>
<dbReference type="HOGENOM" id="CLU_079959_0_2_6"/>
<dbReference type="OMA" id="RAITWWM"/>
<dbReference type="Proteomes" id="UP000000558">
    <property type="component" value="Chromosome"/>
</dbReference>
<dbReference type="Proteomes" id="UP000002519">
    <property type="component" value="Chromosome"/>
</dbReference>
<dbReference type="GO" id="GO:0005829">
    <property type="term" value="C:cytosol"/>
    <property type="evidence" value="ECO:0007669"/>
    <property type="project" value="TreeGrafter"/>
</dbReference>
<dbReference type="GO" id="GO:0005524">
    <property type="term" value="F:ATP binding"/>
    <property type="evidence" value="ECO:0007669"/>
    <property type="project" value="UniProtKB-UniRule"/>
</dbReference>
<dbReference type="GO" id="GO:0036430">
    <property type="term" value="F:CMP kinase activity"/>
    <property type="evidence" value="ECO:0007669"/>
    <property type="project" value="RHEA"/>
</dbReference>
<dbReference type="GO" id="GO:0036431">
    <property type="term" value="F:dCMP kinase activity"/>
    <property type="evidence" value="ECO:0007669"/>
    <property type="project" value="RHEA"/>
</dbReference>
<dbReference type="GO" id="GO:0015949">
    <property type="term" value="P:nucleobase-containing small molecule interconversion"/>
    <property type="evidence" value="ECO:0007669"/>
    <property type="project" value="TreeGrafter"/>
</dbReference>
<dbReference type="GO" id="GO:0006220">
    <property type="term" value="P:pyrimidine nucleotide metabolic process"/>
    <property type="evidence" value="ECO:0007669"/>
    <property type="project" value="UniProtKB-UniRule"/>
</dbReference>
<dbReference type="CDD" id="cd02020">
    <property type="entry name" value="CMPK"/>
    <property type="match status" value="1"/>
</dbReference>
<dbReference type="FunFam" id="3.40.50.300:FF:000262">
    <property type="entry name" value="Cytidylate kinase"/>
    <property type="match status" value="1"/>
</dbReference>
<dbReference type="Gene3D" id="3.40.50.300">
    <property type="entry name" value="P-loop containing nucleotide triphosphate hydrolases"/>
    <property type="match status" value="1"/>
</dbReference>
<dbReference type="HAMAP" id="MF_00238">
    <property type="entry name" value="Cytidyl_kinase_type1"/>
    <property type="match status" value="1"/>
</dbReference>
<dbReference type="InterPro" id="IPR003136">
    <property type="entry name" value="Cytidylate_kin"/>
</dbReference>
<dbReference type="InterPro" id="IPR011994">
    <property type="entry name" value="Cytidylate_kinase_dom"/>
</dbReference>
<dbReference type="InterPro" id="IPR027417">
    <property type="entry name" value="P-loop_NTPase"/>
</dbReference>
<dbReference type="NCBIfam" id="TIGR00017">
    <property type="entry name" value="cmk"/>
    <property type="match status" value="1"/>
</dbReference>
<dbReference type="PANTHER" id="PTHR21299:SF2">
    <property type="entry name" value="CYTIDYLATE KINASE"/>
    <property type="match status" value="1"/>
</dbReference>
<dbReference type="PANTHER" id="PTHR21299">
    <property type="entry name" value="CYTIDYLATE KINASE/PANTOATE-BETA-ALANINE LIGASE"/>
    <property type="match status" value="1"/>
</dbReference>
<dbReference type="Pfam" id="PF02224">
    <property type="entry name" value="Cytidylate_kin"/>
    <property type="match status" value="1"/>
</dbReference>
<dbReference type="SUPFAM" id="SSF52540">
    <property type="entry name" value="P-loop containing nucleoside triphosphate hydrolases"/>
    <property type="match status" value="1"/>
</dbReference>
<name>KCY_ECO57</name>
<feature type="chain" id="PRO_0000131915" description="Cytidylate kinase">
    <location>
        <begin position="1"/>
        <end position="227"/>
    </location>
</feature>
<feature type="binding site" evidence="1">
    <location>
        <begin position="12"/>
        <end position="20"/>
    </location>
    <ligand>
        <name>ATP</name>
        <dbReference type="ChEBI" id="CHEBI:30616"/>
    </ligand>
</feature>
<protein>
    <recommendedName>
        <fullName>Cytidylate kinase</fullName>
        <shortName>CK</shortName>
        <ecNumber>2.7.4.25</ecNumber>
    </recommendedName>
    <alternativeName>
        <fullName>Cytidine monophosphate kinase</fullName>
        <shortName>CMP kinase</shortName>
    </alternativeName>
</protein>
<gene>
    <name type="primary">cmk</name>
    <name type="synonym">mssA</name>
    <name type="ordered locus">Z1256</name>
    <name type="ordered locus">ECs0993</name>
</gene>
<reference key="1">
    <citation type="journal article" date="2001" name="Nature">
        <title>Genome sequence of enterohaemorrhagic Escherichia coli O157:H7.</title>
        <authorList>
            <person name="Perna N.T."/>
            <person name="Plunkett G. III"/>
            <person name="Burland V."/>
            <person name="Mau B."/>
            <person name="Glasner J.D."/>
            <person name="Rose D.J."/>
            <person name="Mayhew G.F."/>
            <person name="Evans P.S."/>
            <person name="Gregor J."/>
            <person name="Kirkpatrick H.A."/>
            <person name="Posfai G."/>
            <person name="Hackett J."/>
            <person name="Klink S."/>
            <person name="Boutin A."/>
            <person name="Shao Y."/>
            <person name="Miller L."/>
            <person name="Grotbeck E.J."/>
            <person name="Davis N.W."/>
            <person name="Lim A."/>
            <person name="Dimalanta E.T."/>
            <person name="Potamousis K."/>
            <person name="Apodaca J."/>
            <person name="Anantharaman T.S."/>
            <person name="Lin J."/>
            <person name="Yen G."/>
            <person name="Schwartz D.C."/>
            <person name="Welch R.A."/>
            <person name="Blattner F.R."/>
        </authorList>
    </citation>
    <scope>NUCLEOTIDE SEQUENCE [LARGE SCALE GENOMIC DNA]</scope>
    <source>
        <strain>O157:H7 / EDL933 / ATCC 700927 / EHEC</strain>
    </source>
</reference>
<reference key="2">
    <citation type="journal article" date="2001" name="DNA Res.">
        <title>Complete genome sequence of enterohemorrhagic Escherichia coli O157:H7 and genomic comparison with a laboratory strain K-12.</title>
        <authorList>
            <person name="Hayashi T."/>
            <person name="Makino K."/>
            <person name="Ohnishi M."/>
            <person name="Kurokawa K."/>
            <person name="Ishii K."/>
            <person name="Yokoyama K."/>
            <person name="Han C.-G."/>
            <person name="Ohtsubo E."/>
            <person name="Nakayama K."/>
            <person name="Murata T."/>
            <person name="Tanaka M."/>
            <person name="Tobe T."/>
            <person name="Iida T."/>
            <person name="Takami H."/>
            <person name="Honda T."/>
            <person name="Sasakawa C."/>
            <person name="Ogasawara N."/>
            <person name="Yasunaga T."/>
            <person name="Kuhara S."/>
            <person name="Shiba T."/>
            <person name="Hattori M."/>
            <person name="Shinagawa H."/>
        </authorList>
    </citation>
    <scope>NUCLEOTIDE SEQUENCE [LARGE SCALE GENOMIC DNA]</scope>
    <source>
        <strain>O157:H7 / Sakai / RIMD 0509952 / EHEC</strain>
    </source>
</reference>
<comment type="catalytic activity">
    <reaction>
        <text>CMP + ATP = CDP + ADP</text>
        <dbReference type="Rhea" id="RHEA:11600"/>
        <dbReference type="ChEBI" id="CHEBI:30616"/>
        <dbReference type="ChEBI" id="CHEBI:58069"/>
        <dbReference type="ChEBI" id="CHEBI:60377"/>
        <dbReference type="ChEBI" id="CHEBI:456216"/>
        <dbReference type="EC" id="2.7.4.25"/>
    </reaction>
</comment>
<comment type="catalytic activity">
    <reaction>
        <text>dCMP + ATP = dCDP + ADP</text>
        <dbReference type="Rhea" id="RHEA:25094"/>
        <dbReference type="ChEBI" id="CHEBI:30616"/>
        <dbReference type="ChEBI" id="CHEBI:57566"/>
        <dbReference type="ChEBI" id="CHEBI:58593"/>
        <dbReference type="ChEBI" id="CHEBI:456216"/>
        <dbReference type="EC" id="2.7.4.25"/>
    </reaction>
</comment>
<comment type="subcellular location">
    <subcellularLocation>
        <location evidence="1">Cytoplasm</location>
    </subcellularLocation>
</comment>
<comment type="similarity">
    <text evidence="2">Belongs to the cytidylate kinase family. Type 1 subfamily.</text>
</comment>
<proteinExistence type="inferred from homology"/>